<comment type="function">
    <text evidence="6">Hydrolyzes fatty acids from S-acylated cysteine residues in proteins. Has depalmitoylating activity towards NRAS and DLG4/PSD95.</text>
</comment>
<comment type="catalytic activity">
    <reaction evidence="6">
        <text>S-hexadecanoyl-L-cysteinyl-[protein] + H2O = L-cysteinyl-[protein] + hexadecanoate + H(+)</text>
        <dbReference type="Rhea" id="RHEA:19233"/>
        <dbReference type="Rhea" id="RHEA-COMP:10131"/>
        <dbReference type="Rhea" id="RHEA-COMP:11032"/>
        <dbReference type="ChEBI" id="CHEBI:7896"/>
        <dbReference type="ChEBI" id="CHEBI:15377"/>
        <dbReference type="ChEBI" id="CHEBI:15378"/>
        <dbReference type="ChEBI" id="CHEBI:29950"/>
        <dbReference type="ChEBI" id="CHEBI:74151"/>
        <dbReference type="EC" id="3.1.2.22"/>
    </reaction>
</comment>
<comment type="activity regulation">
    <text evidence="6">Inhibited by palmostatin-B.</text>
</comment>
<comment type="interaction">
    <interactant intactId="EBI-22011868">
        <id>Q6PCB6</id>
    </interactant>
    <interactant intactId="EBI-640741">
        <id>P01023</id>
        <label>A2M</label>
    </interactant>
    <organismsDiffer>false</organismsDiffer>
    <experiments>3</experiments>
</comment>
<comment type="interaction">
    <interactant intactId="EBI-22011868">
        <id>Q6PCB6</id>
    </interactant>
    <interactant intactId="EBI-21535880">
        <id>Q92870-2</id>
        <label>APBB2</label>
    </interactant>
    <organismsDiffer>false</organismsDiffer>
    <experiments>3</experiments>
</comment>
<comment type="interaction">
    <interactant intactId="EBI-22011868">
        <id>Q6PCB6</id>
    </interactant>
    <interactant intactId="EBI-946046">
        <id>P54252</id>
        <label>ATXN3</label>
    </interactant>
    <organismsDiffer>false</organismsDiffer>
    <experiments>3</experiments>
</comment>
<comment type="interaction">
    <interactant intactId="EBI-22011868">
        <id>Q6PCB6</id>
    </interactant>
    <interactant intactId="EBI-10968534">
        <id>P50570-2</id>
        <label>DNM2</label>
    </interactant>
    <organismsDiffer>false</organismsDiffer>
    <experiments>3</experiments>
</comment>
<comment type="interaction">
    <interactant intactId="EBI-22011868">
        <id>Q6PCB6</id>
    </interactant>
    <interactant intactId="EBI-466029">
        <id>P42858</id>
        <label>HTT</label>
    </interactant>
    <organismsDiffer>false</organismsDiffer>
    <experiments>21</experiments>
</comment>
<comment type="interaction">
    <interactant intactId="EBI-22011868">
        <id>Q6PCB6</id>
    </interactant>
    <interactant intactId="EBI-1189067">
        <id>P51608</id>
        <label>MECP2</label>
    </interactant>
    <organismsDiffer>false</organismsDiffer>
    <experiments>3</experiments>
</comment>
<comment type="interaction">
    <interactant intactId="EBI-22011868">
        <id>Q6PCB6</id>
    </interactant>
    <interactant intactId="EBI-748974">
        <id>Q96CV9</id>
        <label>OPTN</label>
    </interactant>
    <organismsDiffer>false</organismsDiffer>
    <experiments>3</experiments>
</comment>
<comment type="interaction">
    <interactant intactId="EBI-22011868">
        <id>Q6PCB6</id>
    </interactant>
    <interactant intactId="EBI-752057">
        <id>Q7Z412</id>
        <label>PEX26</label>
    </interactant>
    <organismsDiffer>false</organismsDiffer>
    <experiments>3</experiments>
</comment>
<comment type="interaction">
    <interactant intactId="EBI-22011868">
        <id>Q6PCB6</id>
    </interactant>
    <interactant intactId="EBI-721853">
        <id>O14832</id>
        <label>PHYH</label>
    </interactant>
    <organismsDiffer>false</organismsDiffer>
    <experiments>3</experiments>
</comment>
<comment type="interaction">
    <interactant intactId="EBI-22011868">
        <id>Q6PCB6</id>
    </interactant>
    <interactant intactId="EBI-50433196">
        <id>A0A6Q8PF08</id>
        <label>PMP22</label>
    </interactant>
    <organismsDiffer>false</organismsDiffer>
    <experiments>3</experiments>
</comment>
<comment type="interaction">
    <interactant intactId="EBI-22011868">
        <id>Q6PCB6</id>
    </interactant>
    <interactant intactId="EBI-395421">
        <id>Q16637</id>
        <label>SMN2</label>
    </interactant>
    <organismsDiffer>false</organismsDiffer>
    <experiments>3</experiments>
</comment>
<comment type="interaction">
    <interactant intactId="EBI-22011868">
        <id>Q6PCB6</id>
    </interactant>
    <interactant intactId="EBI-985879">
        <id>P37840</id>
        <label>SNCA</label>
    </interactant>
    <organismsDiffer>false</organismsDiffer>
    <experiments>3</experiments>
</comment>
<comment type="interaction">
    <interactant intactId="EBI-22011868">
        <id>Q6PCB6</id>
    </interactant>
    <interactant intactId="EBI-524257">
        <id>O14656</id>
        <label>TOR1A</label>
    </interactant>
    <organismsDiffer>false</organismsDiffer>
    <experiments>3</experiments>
</comment>
<comment type="interaction">
    <interactant intactId="EBI-22011868">
        <id>Q6PCB6</id>
    </interactant>
    <interactant intactId="EBI-25847109">
        <id>O14656-2</id>
        <label>TOR1A</label>
    </interactant>
    <organismsDiffer>false</organismsDiffer>
    <experiments>3</experiments>
</comment>
<comment type="subcellular location">
    <subcellularLocation>
        <location evidence="1">Recycling endosome membrane</location>
        <topology evidence="1">Lipid-anchor</topology>
        <orientation evidence="1">Cytoplasmic side</orientation>
    </subcellularLocation>
    <subcellularLocation>
        <location evidence="1">Cell projection</location>
        <location evidence="1">Dendritic spine</location>
    </subcellularLocation>
    <subcellularLocation>
        <location evidence="1">Postsynaptic density membrane</location>
    </subcellularLocation>
</comment>
<comment type="alternative products">
    <event type="alternative splicing"/>
    <isoform>
        <id>Q6PCB6-1</id>
        <name>1</name>
        <sequence type="displayed"/>
    </isoform>
    <isoform>
        <id>Q6PCB6-2</id>
        <name>2</name>
        <sequence type="described" ref="VSP_027273"/>
    </isoform>
</comment>
<comment type="PTM">
    <text evidence="3">Palmitoylated on cysteine residues located in a cysteine cluster at the N-terminus which promotes membrane localization. Palmitoylation is required for post-synaptic localization and for depalmitoylating activity towards DLG4/PSD95.</text>
</comment>
<comment type="similarity">
    <text evidence="8">Belongs to the AB hydrolase superfamily. ABHD17 family.</text>
</comment>
<reference key="1">
    <citation type="journal article" date="2004" name="Genome Res.">
        <title>The status, quality, and expansion of the NIH full-length cDNA project: the Mammalian Gene Collection (MGC).</title>
        <authorList>
            <consortium name="The MGC Project Team"/>
        </authorList>
    </citation>
    <scope>NUCLEOTIDE SEQUENCE [LARGE SCALE MRNA] (ISOFORMS 1 AND 2)</scope>
    <source>
        <tissue>Embryonic stem cell</tissue>
        <tissue>Placenta</tissue>
    </source>
</reference>
<reference key="2">
    <citation type="submission" date="2000-07" db="EMBL/GenBank/DDBJ databases">
        <authorList>
            <consortium name="The European IMAGE consortium"/>
        </authorList>
    </citation>
    <scope>NUCLEOTIDE SEQUENCE [LARGE SCALE MRNA] OF 88-329</scope>
</reference>
<reference key="3">
    <citation type="journal article" date="2015" name="Elife">
        <title>ABHD17 proteins are novel protein depalmitoylases that regulate N-Ras palmitate turnover and subcellular localization.</title>
        <authorList>
            <person name="Lin D.T."/>
            <person name="Conibear E."/>
        </authorList>
    </citation>
    <scope>FUNCTION</scope>
    <scope>CATALYTIC ACTIVITY</scope>
    <scope>ACTIVITY REGULATION</scope>
</reference>
<sequence>MPEPGPRMNGFSLGELCWLFCCPPCPSRIAAKLAFLPPEPTYTVLAPEQRGAGASAPAPAQATAAAAAAQPAPQQPEEGAGAGPGACSLHLSERADWQYSQRELDAVEVFFSRTARDNRLGCMFVRCAPSSRYTLLFSHGNAVDLGQMCSFYIGLGSRINCNIFSYDYSGYGVSSGKPSEKNLYADIDAAWQALRTRYGVSPENIILYGQSIGTVPTVDLASRYECAAVILHSPLMSGLRVAFPDTRKTYCFDAFPSIDKISKVTSPVLVIHGTEDEVIDFSHGLAMYERCPRAVEPLWVEGAGHNDIELYAQYLERLKQFISHELPNS</sequence>
<organism>
    <name type="scientific">Homo sapiens</name>
    <name type="common">Human</name>
    <dbReference type="NCBI Taxonomy" id="9606"/>
    <lineage>
        <taxon>Eukaryota</taxon>
        <taxon>Metazoa</taxon>
        <taxon>Chordata</taxon>
        <taxon>Craniata</taxon>
        <taxon>Vertebrata</taxon>
        <taxon>Euteleostomi</taxon>
        <taxon>Mammalia</taxon>
        <taxon>Eutheria</taxon>
        <taxon>Euarchontoglires</taxon>
        <taxon>Primates</taxon>
        <taxon>Haplorrhini</taxon>
        <taxon>Catarrhini</taxon>
        <taxon>Hominidae</taxon>
        <taxon>Homo</taxon>
    </lineage>
</organism>
<protein>
    <recommendedName>
        <fullName evidence="8">Alpha/beta hydrolase domain-containing protein 17C</fullName>
        <shortName evidence="9">Abhydrolase domain-containing protein 17C</shortName>
        <ecNumber evidence="6">3.1.2.22</ecNumber>
    </recommendedName>
</protein>
<accession>Q6PCB6</accession>
<accession>Q1RMD6</accession>
<accession>Q9NPM1</accession>
<evidence type="ECO:0000250" key="1">
    <source>
        <dbReference type="UniProtKB" id="B5DFK7"/>
    </source>
</evidence>
<evidence type="ECO:0000250" key="2">
    <source>
        <dbReference type="UniProtKB" id="O75608"/>
    </source>
</evidence>
<evidence type="ECO:0000250" key="3">
    <source>
        <dbReference type="UniProtKB" id="Q7M759"/>
    </source>
</evidence>
<evidence type="ECO:0000250" key="4">
    <source>
        <dbReference type="UniProtKB" id="Q96GS6"/>
    </source>
</evidence>
<evidence type="ECO:0000256" key="5">
    <source>
        <dbReference type="SAM" id="MobiDB-lite"/>
    </source>
</evidence>
<evidence type="ECO:0000269" key="6">
    <source>
    </source>
</evidence>
<evidence type="ECO:0000303" key="7">
    <source>
    </source>
</evidence>
<evidence type="ECO:0000305" key="8"/>
<evidence type="ECO:0000312" key="9">
    <source>
        <dbReference type="HGNC" id="HGNC:26925"/>
    </source>
</evidence>
<name>AB17C_HUMAN</name>
<dbReference type="EC" id="3.1.2.22" evidence="6"/>
<dbReference type="EMBL" id="BC059401">
    <property type="protein sequence ID" value="AAH59401.2"/>
    <property type="molecule type" value="mRNA"/>
</dbReference>
<dbReference type="EMBL" id="BC115003">
    <property type="protein sequence ID" value="AAI15004.1"/>
    <property type="molecule type" value="mRNA"/>
</dbReference>
<dbReference type="EMBL" id="AL390079">
    <property type="protein sequence ID" value="CAB98203.1"/>
    <property type="molecule type" value="mRNA"/>
</dbReference>
<dbReference type="CCDS" id="CCDS45323.1">
    <molecule id="Q6PCB6-1"/>
</dbReference>
<dbReference type="RefSeq" id="NP_067037.1">
    <molecule id="Q6PCB6-1"/>
    <property type="nucleotide sequence ID" value="NM_021214.2"/>
</dbReference>
<dbReference type="SMR" id="Q6PCB6"/>
<dbReference type="BioGRID" id="121819">
    <property type="interactions" value="12"/>
</dbReference>
<dbReference type="FunCoup" id="Q6PCB6">
    <property type="interactions" value="159"/>
</dbReference>
<dbReference type="IntAct" id="Q6PCB6">
    <property type="interactions" value="18"/>
</dbReference>
<dbReference type="STRING" id="9606.ENSP00000258884"/>
<dbReference type="ESTHER" id="human-ABHD17C">
    <property type="family name" value="ABHD17-depalmitoylase"/>
</dbReference>
<dbReference type="MEROPS" id="S09.053"/>
<dbReference type="iPTMnet" id="Q6PCB6"/>
<dbReference type="PhosphoSitePlus" id="Q6PCB6"/>
<dbReference type="SwissPalm" id="Q6PCB6"/>
<dbReference type="BioMuta" id="ABHD17C"/>
<dbReference type="DMDM" id="156630444"/>
<dbReference type="jPOST" id="Q6PCB6"/>
<dbReference type="MassIVE" id="Q6PCB6"/>
<dbReference type="PaxDb" id="9606-ENSP00000258884"/>
<dbReference type="PeptideAtlas" id="Q6PCB6"/>
<dbReference type="ProteomicsDB" id="67058">
    <molecule id="Q6PCB6-1"/>
</dbReference>
<dbReference type="ProteomicsDB" id="67059">
    <molecule id="Q6PCB6-2"/>
</dbReference>
<dbReference type="Pumba" id="Q6PCB6"/>
<dbReference type="Antibodypedia" id="63038">
    <property type="antibodies" value="56 antibodies from 14 providers"/>
</dbReference>
<dbReference type="DNASU" id="58489"/>
<dbReference type="Ensembl" id="ENST00000258884.5">
    <molecule id="Q6PCB6-1"/>
    <property type="protein sequence ID" value="ENSP00000258884.4"/>
    <property type="gene ID" value="ENSG00000136379.12"/>
</dbReference>
<dbReference type="Ensembl" id="ENST00000558464.1">
    <molecule id="Q6PCB6-2"/>
    <property type="protein sequence ID" value="ENSP00000452778.1"/>
    <property type="gene ID" value="ENSG00000136379.12"/>
</dbReference>
<dbReference type="GeneID" id="58489"/>
<dbReference type="KEGG" id="hsa:58489"/>
<dbReference type="MANE-Select" id="ENST00000258884.5">
    <property type="protein sequence ID" value="ENSP00000258884.4"/>
    <property type="RefSeq nucleotide sequence ID" value="NM_021214.2"/>
    <property type="RefSeq protein sequence ID" value="NP_067037.1"/>
</dbReference>
<dbReference type="UCSC" id="uc002bfu.4">
    <molecule id="Q6PCB6-1"/>
    <property type="organism name" value="human"/>
</dbReference>
<dbReference type="AGR" id="HGNC:26925"/>
<dbReference type="CTD" id="58489"/>
<dbReference type="DisGeNET" id="58489"/>
<dbReference type="GeneCards" id="ABHD17C"/>
<dbReference type="HGNC" id="HGNC:26925">
    <property type="gene designation" value="ABHD17C"/>
</dbReference>
<dbReference type="HPA" id="ENSG00000136379">
    <property type="expression patterns" value="Tissue enhanced (intestine)"/>
</dbReference>
<dbReference type="MIM" id="617944">
    <property type="type" value="gene"/>
</dbReference>
<dbReference type="neXtProt" id="NX_Q6PCB6"/>
<dbReference type="OpenTargets" id="ENSG00000136379"/>
<dbReference type="PharmGKB" id="PA162385639"/>
<dbReference type="VEuPathDB" id="HostDB:ENSG00000136379"/>
<dbReference type="eggNOG" id="KOG1552">
    <property type="taxonomic scope" value="Eukaryota"/>
</dbReference>
<dbReference type="GeneTree" id="ENSGT00940000159424"/>
<dbReference type="HOGENOM" id="CLU_029375_5_4_1"/>
<dbReference type="InParanoid" id="Q6PCB6"/>
<dbReference type="OMA" id="YSEREKX"/>
<dbReference type="OrthoDB" id="446723at2759"/>
<dbReference type="PAN-GO" id="Q6PCB6">
    <property type="GO annotations" value="5 GO annotations based on evolutionary models"/>
</dbReference>
<dbReference type="PhylomeDB" id="Q6PCB6"/>
<dbReference type="TreeFam" id="TF314365"/>
<dbReference type="PathwayCommons" id="Q6PCB6"/>
<dbReference type="Reactome" id="R-HSA-9648002">
    <property type="pathway name" value="RAS processing"/>
</dbReference>
<dbReference type="SignaLink" id="Q6PCB6"/>
<dbReference type="BioGRID-ORCS" id="58489">
    <property type="hits" value="11 hits in 1144 CRISPR screens"/>
</dbReference>
<dbReference type="ChiTaRS" id="ABHD17C">
    <property type="organism name" value="human"/>
</dbReference>
<dbReference type="GenomeRNAi" id="58489"/>
<dbReference type="Pharos" id="Q6PCB6">
    <property type="development level" value="Tbio"/>
</dbReference>
<dbReference type="PRO" id="PR:Q6PCB6"/>
<dbReference type="Proteomes" id="UP000005640">
    <property type="component" value="Chromosome 15"/>
</dbReference>
<dbReference type="RNAct" id="Q6PCB6">
    <property type="molecule type" value="protein"/>
</dbReference>
<dbReference type="Bgee" id="ENSG00000136379">
    <property type="expression patterns" value="Expressed in ileal mucosa and 145 other cell types or tissues"/>
</dbReference>
<dbReference type="ExpressionAtlas" id="Q6PCB6">
    <property type="expression patterns" value="baseline and differential"/>
</dbReference>
<dbReference type="GO" id="GO:0043197">
    <property type="term" value="C:dendritic spine"/>
    <property type="evidence" value="ECO:0007669"/>
    <property type="project" value="UniProtKB-SubCell"/>
</dbReference>
<dbReference type="GO" id="GO:0010008">
    <property type="term" value="C:endosome membrane"/>
    <property type="evidence" value="ECO:0000318"/>
    <property type="project" value="GO_Central"/>
</dbReference>
<dbReference type="GO" id="GO:0098978">
    <property type="term" value="C:glutamatergic synapse"/>
    <property type="evidence" value="ECO:0007669"/>
    <property type="project" value="Ensembl"/>
</dbReference>
<dbReference type="GO" id="GO:0005886">
    <property type="term" value="C:plasma membrane"/>
    <property type="evidence" value="ECO:0000318"/>
    <property type="project" value="GO_Central"/>
</dbReference>
<dbReference type="GO" id="GO:0098839">
    <property type="term" value="C:postsynaptic density membrane"/>
    <property type="evidence" value="ECO:0007669"/>
    <property type="project" value="UniProtKB-SubCell"/>
</dbReference>
<dbReference type="GO" id="GO:0055038">
    <property type="term" value="C:recycling endosome membrane"/>
    <property type="evidence" value="ECO:0007669"/>
    <property type="project" value="UniProtKB-SubCell"/>
</dbReference>
<dbReference type="GO" id="GO:0008474">
    <property type="term" value="F:palmitoyl-(protein) hydrolase activity"/>
    <property type="evidence" value="ECO:0000315"/>
    <property type="project" value="UniProtKB"/>
</dbReference>
<dbReference type="GO" id="GO:1902817">
    <property type="term" value="P:negative regulation of protein localization to microtubule"/>
    <property type="evidence" value="ECO:0007669"/>
    <property type="project" value="Ensembl"/>
</dbReference>
<dbReference type="GO" id="GO:1905668">
    <property type="term" value="P:positive regulation of protein localization to endosome"/>
    <property type="evidence" value="ECO:0007669"/>
    <property type="project" value="Ensembl"/>
</dbReference>
<dbReference type="GO" id="GO:0002084">
    <property type="term" value="P:protein depalmitoylation"/>
    <property type="evidence" value="ECO:0000315"/>
    <property type="project" value="UniProtKB"/>
</dbReference>
<dbReference type="GO" id="GO:0099175">
    <property type="term" value="P:regulation of postsynapse organization"/>
    <property type="evidence" value="ECO:0000318"/>
    <property type="project" value="GO_Central"/>
</dbReference>
<dbReference type="FunFam" id="3.40.50.1820:FF:000008">
    <property type="entry name" value="Alpha/beta hydrolase domain-containing protein 17B"/>
    <property type="match status" value="1"/>
</dbReference>
<dbReference type="Gene3D" id="3.40.50.1820">
    <property type="entry name" value="alpha/beta hydrolase"/>
    <property type="match status" value="1"/>
</dbReference>
<dbReference type="InterPro" id="IPR029058">
    <property type="entry name" value="AB_hydrolase_fold"/>
</dbReference>
<dbReference type="InterPro" id="IPR022742">
    <property type="entry name" value="Hydrolase_4"/>
</dbReference>
<dbReference type="PANTHER" id="PTHR12277">
    <property type="entry name" value="ALPHA/BETA HYDROLASE DOMAIN-CONTAINING PROTEIN"/>
    <property type="match status" value="1"/>
</dbReference>
<dbReference type="PANTHER" id="PTHR12277:SF55">
    <property type="entry name" value="ALPHA_BETA HYDROLASE DOMAIN-CONTAINING PROTEIN 17C"/>
    <property type="match status" value="1"/>
</dbReference>
<dbReference type="Pfam" id="PF12146">
    <property type="entry name" value="Hydrolase_4"/>
    <property type="match status" value="1"/>
</dbReference>
<dbReference type="SUPFAM" id="SSF53474">
    <property type="entry name" value="alpha/beta-Hydrolases"/>
    <property type="match status" value="1"/>
</dbReference>
<proteinExistence type="evidence at protein level"/>
<keyword id="KW-0025">Alternative splicing</keyword>
<keyword id="KW-1003">Cell membrane</keyword>
<keyword id="KW-0966">Cell projection</keyword>
<keyword id="KW-0967">Endosome</keyword>
<keyword id="KW-0378">Hydrolase</keyword>
<keyword id="KW-0449">Lipoprotein</keyword>
<keyword id="KW-0472">Membrane</keyword>
<keyword id="KW-0564">Palmitate</keyword>
<keyword id="KW-0628">Postsynaptic cell membrane</keyword>
<keyword id="KW-1267">Proteomics identification</keyword>
<keyword id="KW-1185">Reference proteome</keyword>
<keyword id="KW-0770">Synapse</keyword>
<feature type="chain" id="PRO_0000297513" description="Alpha/beta hydrolase domain-containing protein 17C">
    <location>
        <begin position="1"/>
        <end position="329"/>
    </location>
</feature>
<feature type="region of interest" description="Disordered" evidence="5">
    <location>
        <begin position="53"/>
        <end position="85"/>
    </location>
</feature>
<feature type="compositionally biased region" description="Low complexity" evidence="5">
    <location>
        <begin position="53"/>
        <end position="79"/>
    </location>
</feature>
<feature type="active site" description="Charge relay system" evidence="4">
    <location>
        <position position="211"/>
    </location>
</feature>
<feature type="active site" description="Charge relay system" evidence="2">
    <location>
        <position position="276"/>
    </location>
</feature>
<feature type="active site" description="Charge relay system" evidence="2">
    <location>
        <position position="305"/>
    </location>
</feature>
<feature type="splice variant" id="VSP_027273" description="In isoform 2." evidence="7">
    <location>
        <begin position="223"/>
        <end position="256"/>
    </location>
</feature>
<gene>
    <name evidence="9" type="primary">ABHD17C</name>
    <name type="synonym">FAM108C1</name>
</gene>